<accession>B9KLR1</accession>
<gene>
    <name evidence="1" type="primary">rpsU</name>
    <name type="ordered locus">RSKD131_2076</name>
</gene>
<name>RS21_CERSK</name>
<dbReference type="EMBL" id="CP001150">
    <property type="protein sequence ID" value="ACM01936.1"/>
    <property type="molecule type" value="Genomic_DNA"/>
</dbReference>
<dbReference type="RefSeq" id="WP_002720900.1">
    <property type="nucleotide sequence ID" value="NC_011963.1"/>
</dbReference>
<dbReference type="SMR" id="B9KLR1"/>
<dbReference type="GeneID" id="67447468"/>
<dbReference type="KEGG" id="rsk:RSKD131_2076"/>
<dbReference type="HOGENOM" id="CLU_159258_0_1_5"/>
<dbReference type="GO" id="GO:1990904">
    <property type="term" value="C:ribonucleoprotein complex"/>
    <property type="evidence" value="ECO:0007669"/>
    <property type="project" value="UniProtKB-KW"/>
</dbReference>
<dbReference type="GO" id="GO:0005840">
    <property type="term" value="C:ribosome"/>
    <property type="evidence" value="ECO:0007669"/>
    <property type="project" value="UniProtKB-KW"/>
</dbReference>
<dbReference type="GO" id="GO:0003735">
    <property type="term" value="F:structural constituent of ribosome"/>
    <property type="evidence" value="ECO:0007669"/>
    <property type="project" value="InterPro"/>
</dbReference>
<dbReference type="GO" id="GO:0006412">
    <property type="term" value="P:translation"/>
    <property type="evidence" value="ECO:0007669"/>
    <property type="project" value="UniProtKB-UniRule"/>
</dbReference>
<dbReference type="Gene3D" id="1.20.5.1150">
    <property type="entry name" value="Ribosomal protein S8"/>
    <property type="match status" value="1"/>
</dbReference>
<dbReference type="HAMAP" id="MF_00358">
    <property type="entry name" value="Ribosomal_bS21"/>
    <property type="match status" value="1"/>
</dbReference>
<dbReference type="InterPro" id="IPR001911">
    <property type="entry name" value="Ribosomal_bS21"/>
</dbReference>
<dbReference type="InterPro" id="IPR018278">
    <property type="entry name" value="Ribosomal_bS21_CS"/>
</dbReference>
<dbReference type="InterPro" id="IPR038380">
    <property type="entry name" value="Ribosomal_bS21_sf"/>
</dbReference>
<dbReference type="NCBIfam" id="TIGR00030">
    <property type="entry name" value="S21p"/>
    <property type="match status" value="1"/>
</dbReference>
<dbReference type="PANTHER" id="PTHR21109">
    <property type="entry name" value="MITOCHONDRIAL 28S RIBOSOMAL PROTEIN S21"/>
    <property type="match status" value="1"/>
</dbReference>
<dbReference type="PANTHER" id="PTHR21109:SF0">
    <property type="entry name" value="SMALL RIBOSOMAL SUBUNIT PROTEIN BS21M"/>
    <property type="match status" value="1"/>
</dbReference>
<dbReference type="Pfam" id="PF01165">
    <property type="entry name" value="Ribosomal_S21"/>
    <property type="match status" value="1"/>
</dbReference>
<dbReference type="PROSITE" id="PS01181">
    <property type="entry name" value="RIBOSOMAL_S21"/>
    <property type="match status" value="1"/>
</dbReference>
<keyword id="KW-0687">Ribonucleoprotein</keyword>
<keyword id="KW-0689">Ribosomal protein</keyword>
<protein>
    <recommendedName>
        <fullName evidence="1">Small ribosomal subunit protein bS21</fullName>
    </recommendedName>
    <alternativeName>
        <fullName evidence="2">30S ribosomal protein S21</fullName>
    </alternativeName>
</protein>
<comment type="similarity">
    <text evidence="1">Belongs to the bacterial ribosomal protein bS21 family.</text>
</comment>
<evidence type="ECO:0000255" key="1">
    <source>
        <dbReference type="HAMAP-Rule" id="MF_00358"/>
    </source>
</evidence>
<evidence type="ECO:0000305" key="2"/>
<organism>
    <name type="scientific">Cereibacter sphaeroides (strain KD131 / KCTC 12085)</name>
    <name type="common">Rhodobacter sphaeroides</name>
    <dbReference type="NCBI Taxonomy" id="557760"/>
    <lineage>
        <taxon>Bacteria</taxon>
        <taxon>Pseudomonadati</taxon>
        <taxon>Pseudomonadota</taxon>
        <taxon>Alphaproteobacteria</taxon>
        <taxon>Rhodobacterales</taxon>
        <taxon>Paracoccaceae</taxon>
        <taxon>Cereibacter</taxon>
    </lineage>
</organism>
<feature type="chain" id="PRO_1000133485" description="Small ribosomal subunit protein bS21">
    <location>
        <begin position="1"/>
        <end position="68"/>
    </location>
</feature>
<sequence>MQVSVRDNNVEQALRALKKKLQREGVFREMKLKQHFEKPSVKRAREQAEAVRRARKLARKKAQREGAL</sequence>
<reference key="1">
    <citation type="journal article" date="2009" name="J. Bacteriol.">
        <title>Complete genome sequence of Rhodobacter sphaeroides KD131.</title>
        <authorList>
            <person name="Lim S.-K."/>
            <person name="Kim S.J."/>
            <person name="Cha S.H."/>
            <person name="Oh Y.-K."/>
            <person name="Rhee H.-J."/>
            <person name="Kim M.-S."/>
            <person name="Lee J.K."/>
        </authorList>
    </citation>
    <scope>NUCLEOTIDE SEQUENCE [LARGE SCALE GENOMIC DNA]</scope>
    <source>
        <strain>KD131 / KCTC 12085</strain>
    </source>
</reference>
<proteinExistence type="inferred from homology"/>